<reference key="1">
    <citation type="journal article" date="2003" name="Nucleic Acids Res.">
        <title>The complete genome sequence and analysis of Corynebacterium diphtheriae NCTC13129.</title>
        <authorList>
            <person name="Cerdeno-Tarraga A.-M."/>
            <person name="Efstratiou A."/>
            <person name="Dover L.G."/>
            <person name="Holden M.T.G."/>
            <person name="Pallen M.J."/>
            <person name="Bentley S.D."/>
            <person name="Besra G.S."/>
            <person name="Churcher C.M."/>
            <person name="James K.D."/>
            <person name="De Zoysa A."/>
            <person name="Chillingworth T."/>
            <person name="Cronin A."/>
            <person name="Dowd L."/>
            <person name="Feltwell T."/>
            <person name="Hamlin N."/>
            <person name="Holroyd S."/>
            <person name="Jagels K."/>
            <person name="Moule S."/>
            <person name="Quail M.A."/>
            <person name="Rabbinowitsch E."/>
            <person name="Rutherford K.M."/>
            <person name="Thomson N.R."/>
            <person name="Unwin L."/>
            <person name="Whitehead S."/>
            <person name="Barrell B.G."/>
            <person name="Parkhill J."/>
        </authorList>
    </citation>
    <scope>NUCLEOTIDE SEQUENCE [LARGE SCALE GENOMIC DNA]</scope>
    <source>
        <strain>ATCC 700971 / NCTC 13129 / Biotype gravis</strain>
    </source>
</reference>
<gene>
    <name evidence="2" type="primary">mutM</name>
    <name evidence="2" type="synonym">fpg</name>
    <name type="ordered locus">DIP1543</name>
</gene>
<name>FPG_CORDI</name>
<organism>
    <name type="scientific">Corynebacterium diphtheriae (strain ATCC 700971 / NCTC 13129 / Biotype gravis)</name>
    <dbReference type="NCBI Taxonomy" id="257309"/>
    <lineage>
        <taxon>Bacteria</taxon>
        <taxon>Bacillati</taxon>
        <taxon>Actinomycetota</taxon>
        <taxon>Actinomycetes</taxon>
        <taxon>Mycobacteriales</taxon>
        <taxon>Corynebacteriaceae</taxon>
        <taxon>Corynebacterium</taxon>
    </lineage>
</organism>
<accession>Q6NGH4</accession>
<evidence type="ECO:0000250" key="1"/>
<evidence type="ECO:0000255" key="2">
    <source>
        <dbReference type="HAMAP-Rule" id="MF_00103"/>
    </source>
</evidence>
<protein>
    <recommendedName>
        <fullName evidence="2">Formamidopyrimidine-DNA glycosylase</fullName>
        <shortName evidence="2">Fapy-DNA glycosylase</shortName>
        <ecNumber evidence="2">3.2.2.23</ecNumber>
    </recommendedName>
    <alternativeName>
        <fullName evidence="2">DNA-(apurinic or apyrimidinic site) lyase MutM</fullName>
        <shortName evidence="2">AP lyase MutM</shortName>
        <ecNumber evidence="2">4.2.99.18</ecNumber>
    </alternativeName>
</protein>
<sequence length="296" mass="33183">MPELPEVEVVRRGLTPYVLGATITDVAVEHPRSIRTIEGGAAELIGSLQGREVTRIGRRGKFLWFELTGHGDYACGFPQQGLLVHLGMSGQMLIKTQNSALHPHRRIRTTIVRSDAQECFELWFVDQRTFGYWAPTTFVETAHGCVPEQITHIARDLLDPQLKRENLARLIRKKNSEIKRVLLNQEIVSGIGNIYADEMLWAARIHPQTPASHLSVAQLSNLLEHGQRVMNAALDQGGTSFDSLYVNVNGQSGYFDVSLHAYGQQGQACDRCGSNIIREKFANRSSHFCPRCQLMH</sequence>
<dbReference type="EC" id="3.2.2.23" evidence="2"/>
<dbReference type="EC" id="4.2.99.18" evidence="2"/>
<dbReference type="EMBL" id="BX248358">
    <property type="protein sequence ID" value="CAE50068.1"/>
    <property type="molecule type" value="Genomic_DNA"/>
</dbReference>
<dbReference type="RefSeq" id="WP_010935139.1">
    <property type="nucleotide sequence ID" value="NC_002935.2"/>
</dbReference>
<dbReference type="SMR" id="Q6NGH4"/>
<dbReference type="STRING" id="257309.DIP1543"/>
<dbReference type="KEGG" id="cdi:DIP1543"/>
<dbReference type="HOGENOM" id="CLU_038423_1_2_11"/>
<dbReference type="Proteomes" id="UP000002198">
    <property type="component" value="Chromosome"/>
</dbReference>
<dbReference type="GO" id="GO:0034039">
    <property type="term" value="F:8-oxo-7,8-dihydroguanine DNA N-glycosylase activity"/>
    <property type="evidence" value="ECO:0007669"/>
    <property type="project" value="TreeGrafter"/>
</dbReference>
<dbReference type="GO" id="GO:0140078">
    <property type="term" value="F:class I DNA-(apurinic or apyrimidinic site) endonuclease activity"/>
    <property type="evidence" value="ECO:0007669"/>
    <property type="project" value="UniProtKB-EC"/>
</dbReference>
<dbReference type="GO" id="GO:0003684">
    <property type="term" value="F:damaged DNA binding"/>
    <property type="evidence" value="ECO:0007669"/>
    <property type="project" value="InterPro"/>
</dbReference>
<dbReference type="GO" id="GO:0008270">
    <property type="term" value="F:zinc ion binding"/>
    <property type="evidence" value="ECO:0007669"/>
    <property type="project" value="UniProtKB-UniRule"/>
</dbReference>
<dbReference type="GO" id="GO:0006284">
    <property type="term" value="P:base-excision repair"/>
    <property type="evidence" value="ECO:0007669"/>
    <property type="project" value="InterPro"/>
</dbReference>
<dbReference type="CDD" id="cd08966">
    <property type="entry name" value="EcFpg-like_N"/>
    <property type="match status" value="1"/>
</dbReference>
<dbReference type="FunFam" id="1.10.8.50:FF:000003">
    <property type="entry name" value="Formamidopyrimidine-DNA glycosylase"/>
    <property type="match status" value="1"/>
</dbReference>
<dbReference type="Gene3D" id="1.10.8.50">
    <property type="match status" value="1"/>
</dbReference>
<dbReference type="Gene3D" id="3.20.190.10">
    <property type="entry name" value="MutM-like, N-terminal"/>
    <property type="match status" value="1"/>
</dbReference>
<dbReference type="HAMAP" id="MF_00103">
    <property type="entry name" value="Fapy_DNA_glycosyl"/>
    <property type="match status" value="1"/>
</dbReference>
<dbReference type="InterPro" id="IPR015886">
    <property type="entry name" value="DNA_glyclase/AP_lyase_DNA-bd"/>
</dbReference>
<dbReference type="InterPro" id="IPR015887">
    <property type="entry name" value="DNA_glyclase_Znf_dom_DNA_BS"/>
</dbReference>
<dbReference type="InterPro" id="IPR020629">
    <property type="entry name" value="Formamido-pyr_DNA_Glyclase"/>
</dbReference>
<dbReference type="InterPro" id="IPR012319">
    <property type="entry name" value="FPG_cat"/>
</dbReference>
<dbReference type="InterPro" id="IPR035937">
    <property type="entry name" value="MutM-like_N-ter"/>
</dbReference>
<dbReference type="InterPro" id="IPR010979">
    <property type="entry name" value="Ribosomal_uS13-like_H2TH"/>
</dbReference>
<dbReference type="InterPro" id="IPR000214">
    <property type="entry name" value="Znf_DNA_glyclase/AP_lyase"/>
</dbReference>
<dbReference type="InterPro" id="IPR010663">
    <property type="entry name" value="Znf_FPG/IleRS"/>
</dbReference>
<dbReference type="NCBIfam" id="TIGR00577">
    <property type="entry name" value="fpg"/>
    <property type="match status" value="1"/>
</dbReference>
<dbReference type="NCBIfam" id="NF002211">
    <property type="entry name" value="PRK01103.1"/>
    <property type="match status" value="1"/>
</dbReference>
<dbReference type="PANTHER" id="PTHR22993">
    <property type="entry name" value="FORMAMIDOPYRIMIDINE-DNA GLYCOSYLASE"/>
    <property type="match status" value="1"/>
</dbReference>
<dbReference type="PANTHER" id="PTHR22993:SF9">
    <property type="entry name" value="FORMAMIDOPYRIMIDINE-DNA GLYCOSYLASE"/>
    <property type="match status" value="1"/>
</dbReference>
<dbReference type="Pfam" id="PF01149">
    <property type="entry name" value="Fapy_DNA_glyco"/>
    <property type="match status" value="1"/>
</dbReference>
<dbReference type="Pfam" id="PF06831">
    <property type="entry name" value="H2TH"/>
    <property type="match status" value="1"/>
</dbReference>
<dbReference type="Pfam" id="PF06827">
    <property type="entry name" value="zf-FPG_IleRS"/>
    <property type="match status" value="1"/>
</dbReference>
<dbReference type="SMART" id="SM00898">
    <property type="entry name" value="Fapy_DNA_glyco"/>
    <property type="match status" value="1"/>
</dbReference>
<dbReference type="SMART" id="SM01232">
    <property type="entry name" value="H2TH"/>
    <property type="match status" value="1"/>
</dbReference>
<dbReference type="SUPFAM" id="SSF57716">
    <property type="entry name" value="Glucocorticoid receptor-like (DNA-binding domain)"/>
    <property type="match status" value="1"/>
</dbReference>
<dbReference type="SUPFAM" id="SSF81624">
    <property type="entry name" value="N-terminal domain of MutM-like DNA repair proteins"/>
    <property type="match status" value="1"/>
</dbReference>
<dbReference type="SUPFAM" id="SSF46946">
    <property type="entry name" value="S13-like H2TH domain"/>
    <property type="match status" value="1"/>
</dbReference>
<dbReference type="PROSITE" id="PS51068">
    <property type="entry name" value="FPG_CAT"/>
    <property type="match status" value="1"/>
</dbReference>
<dbReference type="PROSITE" id="PS01242">
    <property type="entry name" value="ZF_FPG_1"/>
    <property type="match status" value="1"/>
</dbReference>
<dbReference type="PROSITE" id="PS51066">
    <property type="entry name" value="ZF_FPG_2"/>
    <property type="match status" value="1"/>
</dbReference>
<feature type="initiator methionine" description="Removed" evidence="1">
    <location>
        <position position="1"/>
    </location>
</feature>
<feature type="chain" id="PRO_0000228427" description="Formamidopyrimidine-DNA glycosylase">
    <location>
        <begin position="2"/>
        <end position="296"/>
    </location>
</feature>
<feature type="zinc finger region" description="FPG-type" evidence="2">
    <location>
        <begin position="260"/>
        <end position="294"/>
    </location>
</feature>
<feature type="active site" description="Schiff-base intermediate with DNA" evidence="2">
    <location>
        <position position="2"/>
    </location>
</feature>
<feature type="active site" description="Proton donor" evidence="2">
    <location>
        <position position="3"/>
    </location>
</feature>
<feature type="active site" description="Proton donor; for beta-elimination activity" evidence="2">
    <location>
        <position position="61"/>
    </location>
</feature>
<feature type="active site" description="Proton donor; for delta-elimination activity" evidence="2">
    <location>
        <position position="284"/>
    </location>
</feature>
<feature type="binding site" evidence="2">
    <location>
        <position position="104"/>
    </location>
    <ligand>
        <name>DNA</name>
        <dbReference type="ChEBI" id="CHEBI:16991"/>
    </ligand>
</feature>
<feature type="binding site" evidence="2">
    <location>
        <position position="128"/>
    </location>
    <ligand>
        <name>DNA</name>
        <dbReference type="ChEBI" id="CHEBI:16991"/>
    </ligand>
</feature>
<feature type="binding site" evidence="2">
    <location>
        <position position="174"/>
    </location>
    <ligand>
        <name>DNA</name>
        <dbReference type="ChEBI" id="CHEBI:16991"/>
    </ligand>
</feature>
<keyword id="KW-0227">DNA damage</keyword>
<keyword id="KW-0234">DNA repair</keyword>
<keyword id="KW-0238">DNA-binding</keyword>
<keyword id="KW-0326">Glycosidase</keyword>
<keyword id="KW-0378">Hydrolase</keyword>
<keyword id="KW-0456">Lyase</keyword>
<keyword id="KW-0479">Metal-binding</keyword>
<keyword id="KW-0511">Multifunctional enzyme</keyword>
<keyword id="KW-1185">Reference proteome</keyword>
<keyword id="KW-0862">Zinc</keyword>
<keyword id="KW-0863">Zinc-finger</keyword>
<proteinExistence type="inferred from homology"/>
<comment type="function">
    <text evidence="2">Involved in base excision repair of DNA damaged by oxidation or by mutagenic agents. Acts as a DNA glycosylase that recognizes and removes damaged bases. Has a preference for oxidized purines, such as 7,8-dihydro-8-oxoguanine (8-oxoG). Has AP (apurinic/apyrimidinic) lyase activity and introduces nicks in the DNA strand. Cleaves the DNA backbone by beta-delta elimination to generate a single-strand break at the site of the removed base with both 3'- and 5'-phosphates.</text>
</comment>
<comment type="catalytic activity">
    <reaction evidence="2">
        <text>Hydrolysis of DNA containing ring-opened 7-methylguanine residues, releasing 2,6-diamino-4-hydroxy-5-(N-methyl)formamidopyrimidine.</text>
        <dbReference type="EC" id="3.2.2.23"/>
    </reaction>
</comment>
<comment type="catalytic activity">
    <reaction evidence="2">
        <text>2'-deoxyribonucleotide-(2'-deoxyribose 5'-phosphate)-2'-deoxyribonucleotide-DNA = a 3'-end 2'-deoxyribonucleotide-(2,3-dehydro-2,3-deoxyribose 5'-phosphate)-DNA + a 5'-end 5'-phospho-2'-deoxyribonucleoside-DNA + H(+)</text>
        <dbReference type="Rhea" id="RHEA:66592"/>
        <dbReference type="Rhea" id="RHEA-COMP:13180"/>
        <dbReference type="Rhea" id="RHEA-COMP:16897"/>
        <dbReference type="Rhea" id="RHEA-COMP:17067"/>
        <dbReference type="ChEBI" id="CHEBI:15378"/>
        <dbReference type="ChEBI" id="CHEBI:136412"/>
        <dbReference type="ChEBI" id="CHEBI:157695"/>
        <dbReference type="ChEBI" id="CHEBI:167181"/>
        <dbReference type="EC" id="4.2.99.18"/>
    </reaction>
</comment>
<comment type="cofactor">
    <cofactor evidence="2">
        <name>Zn(2+)</name>
        <dbReference type="ChEBI" id="CHEBI:29105"/>
    </cofactor>
    <text evidence="2">Binds 1 zinc ion per subunit.</text>
</comment>
<comment type="subunit">
    <text evidence="2">Monomer.</text>
</comment>
<comment type="similarity">
    <text evidence="2">Belongs to the FPG family.</text>
</comment>